<protein>
    <recommendedName>
        <fullName evidence="1">Keratin, type I cuticular Ha5</fullName>
    </recommendedName>
    <alternativeName>
        <fullName evidence="5">Keratin-35</fullName>
        <shortName>K35</shortName>
    </alternativeName>
</protein>
<reference evidence="5" key="1">
    <citation type="submission" date="2007-10" db="EMBL/GenBank/DDBJ databases">
        <title>Temporal and spatial expression patterns of keratin intermediate filament (KIF) protein and keratin associated protein (KAP) genes in wool follicles.</title>
        <authorList>
            <person name="Yu Z."/>
            <person name="Gordon S.W."/>
            <person name="Nixon A.J."/>
            <person name="Bawden C.S."/>
            <person name="Rogers M.A."/>
            <person name="Wildermoth J.E."/>
            <person name="Maqbool N.J."/>
            <person name="Pearson A.J."/>
        </authorList>
    </citation>
    <scope>NUCLEOTIDE SEQUENCE [MRNA]</scope>
</reference>
<gene>
    <name evidence="1" type="primary">KRT35</name>
</gene>
<comment type="miscellaneous">
    <text evidence="4">There are two types of hair/microfibrillar keratin, I (acidic) and II (neutral to basic).</text>
</comment>
<comment type="similarity">
    <text evidence="3">Belongs to the intermediate filament family.</text>
</comment>
<keyword id="KW-0175">Coiled coil</keyword>
<keyword id="KW-0403">Intermediate filament</keyword>
<keyword id="KW-0416">Keratin</keyword>
<keyword id="KW-1185">Reference proteome</keyword>
<feature type="chain" id="PRO_0000361026" description="Keratin, type I cuticular Ha5">
    <location>
        <begin position="1"/>
        <end position="455"/>
    </location>
</feature>
<feature type="domain" description="IF rod" evidence="3">
    <location>
        <begin position="97"/>
        <end position="408"/>
    </location>
</feature>
<feature type="region of interest" description="Head" evidence="2">
    <location>
        <begin position="1"/>
        <end position="97"/>
    </location>
</feature>
<feature type="region of interest" description="Coil 1A" evidence="2">
    <location>
        <begin position="98"/>
        <end position="132"/>
    </location>
</feature>
<feature type="region of interest" description="Linker 1" evidence="2">
    <location>
        <begin position="133"/>
        <end position="143"/>
    </location>
</feature>
<feature type="region of interest" description="Coil 1B" evidence="2">
    <location>
        <begin position="144"/>
        <end position="244"/>
    </location>
</feature>
<feature type="region of interest" description="Linker 12" evidence="2">
    <location>
        <begin position="245"/>
        <end position="260"/>
    </location>
</feature>
<feature type="region of interest" description="Coil 2" evidence="2">
    <location>
        <begin position="261"/>
        <end position="404"/>
    </location>
</feature>
<feature type="region of interest" description="Tail" evidence="2">
    <location>
        <begin position="405"/>
        <end position="455"/>
    </location>
</feature>
<feature type="site" description="Stutter" evidence="2">
    <location>
        <position position="346"/>
    </location>
</feature>
<organism>
    <name type="scientific">Ovis aries</name>
    <name type="common">Sheep</name>
    <dbReference type="NCBI Taxonomy" id="9940"/>
    <lineage>
        <taxon>Eukaryota</taxon>
        <taxon>Metazoa</taxon>
        <taxon>Chordata</taxon>
        <taxon>Craniata</taxon>
        <taxon>Vertebrata</taxon>
        <taxon>Euteleostomi</taxon>
        <taxon>Mammalia</taxon>
        <taxon>Eutheria</taxon>
        <taxon>Laurasiatheria</taxon>
        <taxon>Artiodactyla</taxon>
        <taxon>Ruminantia</taxon>
        <taxon>Pecora</taxon>
        <taxon>Bovidae</taxon>
        <taxon>Caprinae</taxon>
        <taxon>Ovis</taxon>
    </lineage>
</organism>
<proteinExistence type="evidence at transcript level"/>
<sequence length="455" mass="50456">MASKCLKASFSSGSLKVPGGAGGGSARVSTIFSSSSCKLSGLSRGPRSFSACSVGLGKSSCRAASCLPALCLPSGGFATSYGMAGGWFGEGILTGNEKETMQFLNDRLASYLEKVRQLERENAELESRIRDWCEQQVPYLCPDYQSYFQTIEELQKKILCTKSENARLVVQIDNAKLAADDFRTKYETEVTMRQLVESDMNGLRRILDDLTLCKADLEAQVESLKEELLCLKKNHEEEVNSLRCQLGDRLNVEVDAAPPVDLNRVLNEMRCQYETLVENNRREAEDWFNTQTEELNQQVVSSSEQLQSYQAEIIELRRTVNALEIELQAQHSMRDALESTLAETEARYSSQLAQMQGLIGNVESQLAEIRCDLERQNQEYQVLLDVRARLECEISTYRGLLDSEDCKLPCNPCAPDHSPSKSCLPCLPAASCGPGTAHTTCSPRPICVSCPGSRF</sequence>
<dbReference type="EMBL" id="EU216426">
    <property type="protein sequence ID" value="ABY64914.1"/>
    <property type="molecule type" value="mRNA"/>
</dbReference>
<dbReference type="RefSeq" id="NP_001108233.1">
    <property type="nucleotide sequence ID" value="NM_001114761.1"/>
</dbReference>
<dbReference type="SMR" id="B0LKP1"/>
<dbReference type="STRING" id="9940.ENSOARP00000018025"/>
<dbReference type="PaxDb" id="9940-ENSOARP00000018025"/>
<dbReference type="GeneID" id="100141296"/>
<dbReference type="KEGG" id="oas:100141296"/>
<dbReference type="CTD" id="3886"/>
<dbReference type="eggNOG" id="ENOG502QQY9">
    <property type="taxonomic scope" value="Eukaryota"/>
</dbReference>
<dbReference type="OrthoDB" id="2441647at2759"/>
<dbReference type="Proteomes" id="UP000002356">
    <property type="component" value="Unplaced"/>
</dbReference>
<dbReference type="GO" id="GO:0005882">
    <property type="term" value="C:intermediate filament"/>
    <property type="evidence" value="ECO:0007669"/>
    <property type="project" value="UniProtKB-KW"/>
</dbReference>
<dbReference type="GO" id="GO:0005198">
    <property type="term" value="F:structural molecule activity"/>
    <property type="evidence" value="ECO:0007669"/>
    <property type="project" value="InterPro"/>
</dbReference>
<dbReference type="GO" id="GO:0030855">
    <property type="term" value="P:epithelial cell differentiation"/>
    <property type="evidence" value="ECO:0007669"/>
    <property type="project" value="TreeGrafter"/>
</dbReference>
<dbReference type="GO" id="GO:0045109">
    <property type="term" value="P:intermediate filament organization"/>
    <property type="evidence" value="ECO:0007669"/>
    <property type="project" value="TreeGrafter"/>
</dbReference>
<dbReference type="FunFam" id="1.20.5.1160:FF:000002">
    <property type="entry name" value="Type I keratin 10"/>
    <property type="match status" value="1"/>
</dbReference>
<dbReference type="FunFam" id="1.20.5.170:FF:000002">
    <property type="entry name" value="Type I keratin KA11"/>
    <property type="match status" value="1"/>
</dbReference>
<dbReference type="FunFam" id="1.20.5.500:FF:000001">
    <property type="entry name" value="Type II keratin 23"/>
    <property type="match status" value="1"/>
</dbReference>
<dbReference type="Gene3D" id="1.20.5.170">
    <property type="match status" value="1"/>
</dbReference>
<dbReference type="Gene3D" id="1.20.5.500">
    <property type="entry name" value="Single helix bin"/>
    <property type="match status" value="1"/>
</dbReference>
<dbReference type="Gene3D" id="1.20.5.1160">
    <property type="entry name" value="Vasodilator-stimulated phosphoprotein"/>
    <property type="match status" value="1"/>
</dbReference>
<dbReference type="InterPro" id="IPR018039">
    <property type="entry name" value="IF_conserved"/>
</dbReference>
<dbReference type="InterPro" id="IPR039008">
    <property type="entry name" value="IF_rod_dom"/>
</dbReference>
<dbReference type="InterPro" id="IPR002957">
    <property type="entry name" value="Keratin_I"/>
</dbReference>
<dbReference type="PANTHER" id="PTHR23239">
    <property type="entry name" value="INTERMEDIATE FILAMENT"/>
    <property type="match status" value="1"/>
</dbReference>
<dbReference type="PANTHER" id="PTHR23239:SF193">
    <property type="entry name" value="KERATIN, TYPE I CUTICULAR HA5"/>
    <property type="match status" value="1"/>
</dbReference>
<dbReference type="Pfam" id="PF00038">
    <property type="entry name" value="Filament"/>
    <property type="match status" value="1"/>
</dbReference>
<dbReference type="PRINTS" id="PR01248">
    <property type="entry name" value="TYPE1KERATIN"/>
</dbReference>
<dbReference type="SMART" id="SM01391">
    <property type="entry name" value="Filament"/>
    <property type="match status" value="1"/>
</dbReference>
<dbReference type="SUPFAM" id="SSF64593">
    <property type="entry name" value="Intermediate filament protein, coiled coil region"/>
    <property type="match status" value="2"/>
</dbReference>
<dbReference type="SUPFAM" id="SSF46579">
    <property type="entry name" value="Prefoldin"/>
    <property type="match status" value="1"/>
</dbReference>
<dbReference type="PROSITE" id="PS00226">
    <property type="entry name" value="IF_ROD_1"/>
    <property type="match status" value="1"/>
</dbReference>
<dbReference type="PROSITE" id="PS51842">
    <property type="entry name" value="IF_ROD_2"/>
    <property type="match status" value="1"/>
</dbReference>
<name>KRT35_SHEEP</name>
<evidence type="ECO:0000250" key="1">
    <source>
        <dbReference type="UniProtKB" id="Q92764"/>
    </source>
</evidence>
<evidence type="ECO:0000255" key="2"/>
<evidence type="ECO:0000255" key="3">
    <source>
        <dbReference type="PROSITE-ProRule" id="PRU01188"/>
    </source>
</evidence>
<evidence type="ECO:0000305" key="4"/>
<evidence type="ECO:0000312" key="5">
    <source>
        <dbReference type="EMBL" id="ABY64914.1"/>
    </source>
</evidence>
<accession>B0LKP1</accession>